<reference key="1">
    <citation type="submission" date="2006-06" db="EMBL/GenBank/DDBJ databases">
        <title>Complete sequence of Pseudoalteromonas atlantica T6c.</title>
        <authorList>
            <consortium name="US DOE Joint Genome Institute"/>
            <person name="Copeland A."/>
            <person name="Lucas S."/>
            <person name="Lapidus A."/>
            <person name="Barry K."/>
            <person name="Detter J.C."/>
            <person name="Glavina del Rio T."/>
            <person name="Hammon N."/>
            <person name="Israni S."/>
            <person name="Dalin E."/>
            <person name="Tice H."/>
            <person name="Pitluck S."/>
            <person name="Saunders E."/>
            <person name="Brettin T."/>
            <person name="Bruce D."/>
            <person name="Han C."/>
            <person name="Tapia R."/>
            <person name="Gilna P."/>
            <person name="Schmutz J."/>
            <person name="Larimer F."/>
            <person name="Land M."/>
            <person name="Hauser L."/>
            <person name="Kyrpides N."/>
            <person name="Kim E."/>
            <person name="Karls A.C."/>
            <person name="Bartlett D."/>
            <person name="Higgins B.P."/>
            <person name="Richardson P."/>
        </authorList>
    </citation>
    <scope>NUCLEOTIDE SEQUENCE [LARGE SCALE GENOMIC DNA]</scope>
    <source>
        <strain>T6c / ATCC BAA-1087</strain>
    </source>
</reference>
<name>G6PI_PSEA6</name>
<accession>Q15PR3</accession>
<evidence type="ECO:0000255" key="1">
    <source>
        <dbReference type="HAMAP-Rule" id="MF_00473"/>
    </source>
</evidence>
<keyword id="KW-0963">Cytoplasm</keyword>
<keyword id="KW-0312">Gluconeogenesis</keyword>
<keyword id="KW-0324">Glycolysis</keyword>
<keyword id="KW-0413">Isomerase</keyword>
<dbReference type="EC" id="5.3.1.9" evidence="1"/>
<dbReference type="EMBL" id="CP000388">
    <property type="protein sequence ID" value="ABG42125.1"/>
    <property type="molecule type" value="Genomic_DNA"/>
</dbReference>
<dbReference type="RefSeq" id="WP_011576349.1">
    <property type="nucleotide sequence ID" value="NC_008228.1"/>
</dbReference>
<dbReference type="SMR" id="Q15PR3"/>
<dbReference type="STRING" id="342610.Patl_3623"/>
<dbReference type="KEGG" id="pat:Patl_3623"/>
<dbReference type="eggNOG" id="COG0166">
    <property type="taxonomic scope" value="Bacteria"/>
</dbReference>
<dbReference type="HOGENOM" id="CLU_017947_3_1_6"/>
<dbReference type="OrthoDB" id="140919at2"/>
<dbReference type="UniPathway" id="UPA00109">
    <property type="reaction ID" value="UER00181"/>
</dbReference>
<dbReference type="UniPathway" id="UPA00138"/>
<dbReference type="Proteomes" id="UP000001981">
    <property type="component" value="Chromosome"/>
</dbReference>
<dbReference type="GO" id="GO:0005829">
    <property type="term" value="C:cytosol"/>
    <property type="evidence" value="ECO:0007669"/>
    <property type="project" value="TreeGrafter"/>
</dbReference>
<dbReference type="GO" id="GO:0097367">
    <property type="term" value="F:carbohydrate derivative binding"/>
    <property type="evidence" value="ECO:0007669"/>
    <property type="project" value="InterPro"/>
</dbReference>
<dbReference type="GO" id="GO:0004347">
    <property type="term" value="F:glucose-6-phosphate isomerase activity"/>
    <property type="evidence" value="ECO:0007669"/>
    <property type="project" value="UniProtKB-UniRule"/>
</dbReference>
<dbReference type="GO" id="GO:0048029">
    <property type="term" value="F:monosaccharide binding"/>
    <property type="evidence" value="ECO:0007669"/>
    <property type="project" value="TreeGrafter"/>
</dbReference>
<dbReference type="GO" id="GO:0006094">
    <property type="term" value="P:gluconeogenesis"/>
    <property type="evidence" value="ECO:0007669"/>
    <property type="project" value="UniProtKB-UniRule"/>
</dbReference>
<dbReference type="GO" id="GO:0051156">
    <property type="term" value="P:glucose 6-phosphate metabolic process"/>
    <property type="evidence" value="ECO:0007669"/>
    <property type="project" value="TreeGrafter"/>
</dbReference>
<dbReference type="GO" id="GO:0006096">
    <property type="term" value="P:glycolytic process"/>
    <property type="evidence" value="ECO:0007669"/>
    <property type="project" value="UniProtKB-UniRule"/>
</dbReference>
<dbReference type="CDD" id="cd05015">
    <property type="entry name" value="SIS_PGI_1"/>
    <property type="match status" value="1"/>
</dbReference>
<dbReference type="CDD" id="cd05016">
    <property type="entry name" value="SIS_PGI_2"/>
    <property type="match status" value="1"/>
</dbReference>
<dbReference type="FunFam" id="3.40.50.10490:FF:000018">
    <property type="entry name" value="Glucose-6-phosphate isomerase"/>
    <property type="match status" value="1"/>
</dbReference>
<dbReference type="Gene3D" id="1.10.1390.10">
    <property type="match status" value="1"/>
</dbReference>
<dbReference type="Gene3D" id="3.40.50.10490">
    <property type="entry name" value="Glucose-6-phosphate isomerase like protein, domain 1"/>
    <property type="match status" value="2"/>
</dbReference>
<dbReference type="HAMAP" id="MF_00473">
    <property type="entry name" value="G6P_isomerase"/>
    <property type="match status" value="1"/>
</dbReference>
<dbReference type="InterPro" id="IPR001672">
    <property type="entry name" value="G6P_Isomerase"/>
</dbReference>
<dbReference type="InterPro" id="IPR023096">
    <property type="entry name" value="G6P_Isomerase_C"/>
</dbReference>
<dbReference type="InterPro" id="IPR018189">
    <property type="entry name" value="Phosphoglucose_isomerase_CS"/>
</dbReference>
<dbReference type="InterPro" id="IPR046348">
    <property type="entry name" value="SIS_dom_sf"/>
</dbReference>
<dbReference type="InterPro" id="IPR035476">
    <property type="entry name" value="SIS_PGI_1"/>
</dbReference>
<dbReference type="InterPro" id="IPR035482">
    <property type="entry name" value="SIS_PGI_2"/>
</dbReference>
<dbReference type="NCBIfam" id="NF001211">
    <property type="entry name" value="PRK00179.1"/>
    <property type="match status" value="1"/>
</dbReference>
<dbReference type="PANTHER" id="PTHR11469">
    <property type="entry name" value="GLUCOSE-6-PHOSPHATE ISOMERASE"/>
    <property type="match status" value="1"/>
</dbReference>
<dbReference type="PANTHER" id="PTHR11469:SF1">
    <property type="entry name" value="GLUCOSE-6-PHOSPHATE ISOMERASE"/>
    <property type="match status" value="1"/>
</dbReference>
<dbReference type="Pfam" id="PF00342">
    <property type="entry name" value="PGI"/>
    <property type="match status" value="1"/>
</dbReference>
<dbReference type="PRINTS" id="PR00662">
    <property type="entry name" value="G6PISOMERASE"/>
</dbReference>
<dbReference type="SUPFAM" id="SSF53697">
    <property type="entry name" value="SIS domain"/>
    <property type="match status" value="1"/>
</dbReference>
<dbReference type="PROSITE" id="PS00765">
    <property type="entry name" value="P_GLUCOSE_ISOMERASE_1"/>
    <property type="match status" value="1"/>
</dbReference>
<dbReference type="PROSITE" id="PS00174">
    <property type="entry name" value="P_GLUCOSE_ISOMERASE_2"/>
    <property type="match status" value="1"/>
</dbReference>
<dbReference type="PROSITE" id="PS51463">
    <property type="entry name" value="P_GLUCOSE_ISOMERASE_3"/>
    <property type="match status" value="1"/>
</dbReference>
<proteinExistence type="inferred from homology"/>
<feature type="chain" id="PRO_1000014000" description="Glucose-6-phosphate isomerase">
    <location>
        <begin position="1"/>
        <end position="547"/>
    </location>
</feature>
<feature type="active site" description="Proton donor" evidence="1">
    <location>
        <position position="353"/>
    </location>
</feature>
<feature type="active site" evidence="1">
    <location>
        <position position="384"/>
    </location>
</feature>
<feature type="active site" evidence="1">
    <location>
        <position position="512"/>
    </location>
</feature>
<sequence length="547" mass="60588">MTALTDTPTWQTLASLAEDVKQQHMRDWFASDTSRASKYQQTACGIELDFSKNLITDDVLKALFALADESQVSQKRDAMFKGDIINHTEKRAVLHTALRNFSGEPVYVDGQDVMPEVLACQDKIKDFVASIHSGERKGYTGKALKQIVSIGIGGSFLGPKIMSEALKPYWFDGVKVHFVANVDGCHIQDVLANLDHEETLVVMSSKSFTTQETLQNTLTAKDWFLNAGGTQQDIAKHFIAVSSNIKAATDFGMAEDNIFPMWDWVGGRYSLWSAIGLPIALTLGYDNYRQLLQGAFEMDEHFKTAPAEQNLPMLTALLGVWYINFFGAQSHVLLPYYHYLRGFPAYVQQLDMESNGKNISGDTTAVDYATGPIIWGSEGTNGQHSFHQLIHQGTLLIPADFMLPLNVPNQDNTHHAMLASNCFGQTQALMQGKTFDECYADLEGKGLDEAERVKLATHKTMPGNKPSNTLLFEQMDPKTLGSLVAMYEHKVFVQGAIWGVNSFDQWGVELGKELGNQVLDKIVNTDAALGFDSSTNALIARFRQANS</sequence>
<comment type="function">
    <text evidence="1">Catalyzes the reversible isomerization of glucose-6-phosphate to fructose-6-phosphate.</text>
</comment>
<comment type="catalytic activity">
    <reaction evidence="1">
        <text>alpha-D-glucose 6-phosphate = beta-D-fructose 6-phosphate</text>
        <dbReference type="Rhea" id="RHEA:11816"/>
        <dbReference type="ChEBI" id="CHEBI:57634"/>
        <dbReference type="ChEBI" id="CHEBI:58225"/>
        <dbReference type="EC" id="5.3.1.9"/>
    </reaction>
</comment>
<comment type="pathway">
    <text evidence="1">Carbohydrate biosynthesis; gluconeogenesis.</text>
</comment>
<comment type="pathway">
    <text evidence="1">Carbohydrate degradation; glycolysis; D-glyceraldehyde 3-phosphate and glycerone phosphate from D-glucose: step 2/4.</text>
</comment>
<comment type="subcellular location">
    <subcellularLocation>
        <location evidence="1">Cytoplasm</location>
    </subcellularLocation>
</comment>
<comment type="similarity">
    <text evidence="1">Belongs to the GPI family.</text>
</comment>
<protein>
    <recommendedName>
        <fullName evidence="1">Glucose-6-phosphate isomerase</fullName>
        <shortName evidence="1">GPI</shortName>
        <ecNumber evidence="1">5.3.1.9</ecNumber>
    </recommendedName>
    <alternativeName>
        <fullName evidence="1">Phosphoglucose isomerase</fullName>
        <shortName evidence="1">PGI</shortName>
    </alternativeName>
    <alternativeName>
        <fullName evidence="1">Phosphohexose isomerase</fullName>
        <shortName evidence="1">PHI</shortName>
    </alternativeName>
</protein>
<gene>
    <name evidence="1" type="primary">pgi</name>
    <name type="ordered locus">Patl_3623</name>
</gene>
<organism>
    <name type="scientific">Pseudoalteromonas atlantica (strain T6c / ATCC BAA-1087)</name>
    <dbReference type="NCBI Taxonomy" id="3042615"/>
    <lineage>
        <taxon>Bacteria</taxon>
        <taxon>Pseudomonadati</taxon>
        <taxon>Pseudomonadota</taxon>
        <taxon>Gammaproteobacteria</taxon>
        <taxon>Alteromonadales</taxon>
        <taxon>Alteromonadaceae</taxon>
        <taxon>Paraglaciecola</taxon>
    </lineage>
</organism>